<accession>Q5REG5</accession>
<accession>Q5R7L1</accession>
<sequence length="914" mass="103637">MSAFRNHCPHLDSVGEITKEDLIQKSQGTCQDCKVRGPNLWACLENRCSYVGCGESQVDHSTIHSQETKHYLTVNLTTLRVWCYACSKEVFLDRKLGTQPSLPHVRQPHQIQENSVQDFKIPSNTTLKTPLVAVFDDLDIEVDEEDELRARGLTGLKNIGNTCYMNAALQALSNCPPLTQFFLDCGGLARTDKKPAICKSYLKLMTELWHKSRPGSVVPTNLFQGIKTVNPTFRGYSQQDAQEFLRCLMDLLHEELKEQVMEVEDPQTITTEETMEEDKSQSDVDFQSCESCSNSDKAENENGSSCFSEDNNETTMLIQDDENNSEMSKDWQKEKMCNKINKVNSEGELDKDRDSISETVDLNNQETVKVQIHSRASEYITDVHSNDLSTPQILPSNESINPRLSASPPKSGNLWPGLAPPHKKAQSASPKRKKQHKKYRSVISDIFDGTIISSVQCLTCDRVSVTLETFQDLSLPIPGKEDLAKLHSSSHPTSIVKAGSCGEAYAPQGWIAFFMEYVKRFVVSCVPSWFWGPVVTLQDCLAAFFARDELKGDNMYSCEKCKKLRNGVKFCKVQKFPEILCIHLKRFRHELMFSTKISTHVSFPLEGLDLQPFLAKDSPAQIVTYDLLSVICHHGTASSGHYIAYCRNNLNNLWYEFDDQSVTEVSESTVQNAEAYVLFYRKSSEEAQKERRRISNLLNIMEPSLLQFYISRQWLNKFKTFAEPGPISNNDFLCIHGGVPPRKAGYIEDLVLMLPQNIWDNLYSRYGGGPAVNHLYICHTCQIEAEEIEKKKKNRRKTELEIFIRLNRAFQKEDSPATFYCISMQWFREWESFVKGKDGDPPGPIDNTKIAVTKCGSVMLRQGADSGQISEETWNFLQSIYGGGPEVILRPPVVHVDPDILQAEEKIEVETRSL</sequence>
<evidence type="ECO:0000250" key="1"/>
<evidence type="ECO:0000250" key="2">
    <source>
        <dbReference type="UniProtKB" id="Q8TEY7"/>
    </source>
</evidence>
<evidence type="ECO:0000255" key="3">
    <source>
        <dbReference type="PROSITE-ProRule" id="PRU00502"/>
    </source>
</evidence>
<evidence type="ECO:0000255" key="4">
    <source>
        <dbReference type="PROSITE-ProRule" id="PRU00613"/>
    </source>
</evidence>
<evidence type="ECO:0000255" key="5">
    <source>
        <dbReference type="PROSITE-ProRule" id="PRU10092"/>
    </source>
</evidence>
<evidence type="ECO:0000255" key="6">
    <source>
        <dbReference type="PROSITE-ProRule" id="PRU10093"/>
    </source>
</evidence>
<evidence type="ECO:0000256" key="7">
    <source>
        <dbReference type="SAM" id="MobiDB-lite"/>
    </source>
</evidence>
<evidence type="ECO:0000305" key="8"/>
<gene>
    <name type="primary">USP33</name>
</gene>
<comment type="function">
    <text evidence="1">Deubiquitinating enzyme involved in various processes such as centrosome duplication, cellular migration and beta-2 adrenergic receptor/ADRB2 recycling. Involved in regulation of centrosome duplication by mediating deubiquitination of CCP110 in S and G2/M phase, leading to stabilize CCP110 during the period which centrioles duplicate and elongate. Involved in cell migration via its interaction with intracellular domain of ROBO1, leading to regulate the Slit signaling. Plays a role in commissural axon guidance cross the ventral midline of the neural tube in a Slit-dependent manner, possibly by mediating the deubiquitination of ROBO1. Acts as a regulator of G-protein coupled receptor (GPCR) signaling by mediating the deubiquitination of beta-arrestins (ARRB1 and ARRB2) and beta-2 adrenergic receptor (ADRB2). Plays a central role in ADRB2 recycling and resensitization after prolonged agonist stimulation by constitutively binding ADRB2, mediating deubiquitination of ADRB2 and inhibiting lysosomal trafficking of ADRB2. Upon dissociation, it is probably transferred to the translocated beta-arrestins, leading to beta-arrestins deubiquitination and disengagement from ADRB2. This suggests the existence of a dynamic exchange between the ADRB2 and beta-arrestins. Deubiquitinates DIO2, thereby regulating thyroid hormone regulation. Mediates deubiquitination of both 'Lys-48'- and 'Lys-63'-linked polyubiquitin chains (By similarity).</text>
</comment>
<comment type="catalytic activity">
    <reaction>
        <text>Thiol-dependent hydrolysis of ester, thioester, amide, peptide and isopeptide bonds formed by the C-terminal Gly of ubiquitin (a 76-residue protein attached to proteins as an intracellular targeting signal).</text>
        <dbReference type="EC" id="3.4.19.12"/>
    </reaction>
</comment>
<comment type="subunit">
    <text evidence="2">Interacts with VHL, leading to its ubiquitination and subsequent degradation (By similarity). Interacts with ARRB1 and ARRB2 (By similarity). Interacts with ADRB2 (By similarity). Interacts with DIO2 (By similarity). Interacts with ROBO1 (By similarity). Interacts with SELENBP1; in a selenium-dependent manner (By similarity). Interacts with CCP110 (By similarity).</text>
</comment>
<comment type="subcellular location">
    <subcellularLocation>
        <location evidence="2">Cytoplasm</location>
        <location evidence="2">Perinuclear region</location>
    </subcellularLocation>
    <subcellularLocation>
        <location evidence="2">Cytoplasm</location>
        <location evidence="2">Cytoskeleton</location>
        <location evidence="2">Microtubule organizing center</location>
        <location evidence="2">Centrosome</location>
    </subcellularLocation>
    <text evidence="2">Associates with centrosomes predominantly in S and G2 phases but less in G1 phase (By similarity).</text>
</comment>
<comment type="domain">
    <text evidence="1">The UBP-type zinc finger binds 3 zinc ions. However, it does not bind ubiquitin, probably because the conserved Arg in position 55 is replaced by a Glu residue (By similarity).</text>
</comment>
<comment type="PTM">
    <text evidence="1">Ubiquitinated via a VHL-dependent pathway for proteasomal degradation.</text>
</comment>
<comment type="similarity">
    <text evidence="8">Belongs to the peptidase C19 family. USP20/USP33 subfamily.</text>
</comment>
<keyword id="KW-0963">Cytoplasm</keyword>
<keyword id="KW-0206">Cytoskeleton</keyword>
<keyword id="KW-0254">Endocytosis</keyword>
<keyword id="KW-0378">Hydrolase</keyword>
<keyword id="KW-0479">Metal-binding</keyword>
<keyword id="KW-0597">Phosphoprotein</keyword>
<keyword id="KW-0645">Protease</keyword>
<keyword id="KW-1185">Reference proteome</keyword>
<keyword id="KW-0677">Repeat</keyword>
<keyword id="KW-0788">Thiol protease</keyword>
<keyword id="KW-0832">Ubl conjugation</keyword>
<keyword id="KW-0833">Ubl conjugation pathway</keyword>
<keyword id="KW-0862">Zinc</keyword>
<keyword id="KW-0863">Zinc-finger</keyword>
<organism>
    <name type="scientific">Pongo abelii</name>
    <name type="common">Sumatran orangutan</name>
    <name type="synonym">Pongo pygmaeus abelii</name>
    <dbReference type="NCBI Taxonomy" id="9601"/>
    <lineage>
        <taxon>Eukaryota</taxon>
        <taxon>Metazoa</taxon>
        <taxon>Chordata</taxon>
        <taxon>Craniata</taxon>
        <taxon>Vertebrata</taxon>
        <taxon>Euteleostomi</taxon>
        <taxon>Mammalia</taxon>
        <taxon>Eutheria</taxon>
        <taxon>Euarchontoglires</taxon>
        <taxon>Primates</taxon>
        <taxon>Haplorrhini</taxon>
        <taxon>Catarrhini</taxon>
        <taxon>Hominidae</taxon>
        <taxon>Pongo</taxon>
    </lineage>
</organism>
<dbReference type="EC" id="3.4.19.12"/>
<dbReference type="EMBL" id="CR857564">
    <property type="protein sequence ID" value="CAH89842.1"/>
    <property type="molecule type" value="mRNA"/>
</dbReference>
<dbReference type="EMBL" id="CR860104">
    <property type="protein sequence ID" value="CAH92249.1"/>
    <property type="molecule type" value="mRNA"/>
</dbReference>
<dbReference type="RefSeq" id="NP_001124855.1">
    <property type="nucleotide sequence ID" value="NM_001131383.1"/>
</dbReference>
<dbReference type="FunCoup" id="Q5REG5">
    <property type="interactions" value="3195"/>
</dbReference>
<dbReference type="STRING" id="9601.ENSPPYP00000001418"/>
<dbReference type="MEROPS" id="C19.037"/>
<dbReference type="GeneID" id="100171716"/>
<dbReference type="KEGG" id="pon:100171716"/>
<dbReference type="CTD" id="23032"/>
<dbReference type="eggNOG" id="KOG1870">
    <property type="taxonomic scope" value="Eukaryota"/>
</dbReference>
<dbReference type="InParanoid" id="Q5REG5"/>
<dbReference type="OrthoDB" id="73004at2759"/>
<dbReference type="Proteomes" id="UP000001595">
    <property type="component" value="Unplaced"/>
</dbReference>
<dbReference type="GO" id="GO:0005813">
    <property type="term" value="C:centrosome"/>
    <property type="evidence" value="ECO:0000250"/>
    <property type="project" value="UniProtKB"/>
</dbReference>
<dbReference type="GO" id="GO:0048471">
    <property type="term" value="C:perinuclear region of cytoplasm"/>
    <property type="evidence" value="ECO:0007669"/>
    <property type="project" value="UniProtKB-SubCell"/>
</dbReference>
<dbReference type="GO" id="GO:0004843">
    <property type="term" value="F:cysteine-type deubiquitinase activity"/>
    <property type="evidence" value="ECO:0000250"/>
    <property type="project" value="UniProtKB"/>
</dbReference>
<dbReference type="GO" id="GO:0004197">
    <property type="term" value="F:cysteine-type endopeptidase activity"/>
    <property type="evidence" value="ECO:0000250"/>
    <property type="project" value="UniProtKB"/>
</dbReference>
<dbReference type="GO" id="GO:0008270">
    <property type="term" value="F:zinc ion binding"/>
    <property type="evidence" value="ECO:0000250"/>
    <property type="project" value="UniProtKB"/>
</dbReference>
<dbReference type="GO" id="GO:0007411">
    <property type="term" value="P:axon guidance"/>
    <property type="evidence" value="ECO:0000250"/>
    <property type="project" value="UniProtKB"/>
</dbReference>
<dbReference type="GO" id="GO:0016477">
    <property type="term" value="P:cell migration"/>
    <property type="evidence" value="ECO:0000250"/>
    <property type="project" value="UniProtKB"/>
</dbReference>
<dbReference type="GO" id="GO:0051298">
    <property type="term" value="P:centrosome duplication"/>
    <property type="evidence" value="ECO:0000250"/>
    <property type="project" value="UniProtKB"/>
</dbReference>
<dbReference type="GO" id="GO:0006897">
    <property type="term" value="P:endocytosis"/>
    <property type="evidence" value="ECO:0007669"/>
    <property type="project" value="UniProtKB-KW"/>
</dbReference>
<dbReference type="GO" id="GO:0016579">
    <property type="term" value="P:protein deubiquitination"/>
    <property type="evidence" value="ECO:0000250"/>
    <property type="project" value="UniProtKB"/>
</dbReference>
<dbReference type="GO" id="GO:0071108">
    <property type="term" value="P:protein K48-linked deubiquitination"/>
    <property type="evidence" value="ECO:0000250"/>
    <property type="project" value="UniProtKB"/>
</dbReference>
<dbReference type="GO" id="GO:0070536">
    <property type="term" value="P:protein K63-linked deubiquitination"/>
    <property type="evidence" value="ECO:0000250"/>
    <property type="project" value="UniProtKB"/>
</dbReference>
<dbReference type="GO" id="GO:0006508">
    <property type="term" value="P:proteolysis"/>
    <property type="evidence" value="ECO:0007669"/>
    <property type="project" value="UniProtKB-KW"/>
</dbReference>
<dbReference type="GO" id="GO:0008277">
    <property type="term" value="P:regulation of G protein-coupled receptor signaling pathway"/>
    <property type="evidence" value="ECO:0000250"/>
    <property type="project" value="UniProtKB"/>
</dbReference>
<dbReference type="CDD" id="cd02674">
    <property type="entry name" value="Peptidase_C19R"/>
    <property type="match status" value="1"/>
</dbReference>
<dbReference type="FunFam" id="3.30.2230.10:FF:000001">
    <property type="entry name" value="Ubiquitinyl hydrolase 1"/>
    <property type="match status" value="1"/>
</dbReference>
<dbReference type="FunFam" id="3.30.2230.10:FF:000002">
    <property type="entry name" value="Ubiquitinyl hydrolase 1"/>
    <property type="match status" value="1"/>
</dbReference>
<dbReference type="FunFam" id="3.30.40.10:FF:000065">
    <property type="entry name" value="Ubiquitinyl hydrolase 1"/>
    <property type="match status" value="1"/>
</dbReference>
<dbReference type="FunFam" id="3.90.70.10:FF:000056">
    <property type="entry name" value="Ubiquitinyl hydrolase 1"/>
    <property type="match status" value="1"/>
</dbReference>
<dbReference type="Gene3D" id="3.90.70.10">
    <property type="entry name" value="Cysteine proteinases"/>
    <property type="match status" value="2"/>
</dbReference>
<dbReference type="Gene3D" id="3.30.2230.10">
    <property type="entry name" value="DUSP-like"/>
    <property type="match status" value="2"/>
</dbReference>
<dbReference type="Gene3D" id="3.30.40.10">
    <property type="entry name" value="Zinc/RING finger domain, C3HC4 (zinc finger)"/>
    <property type="match status" value="1"/>
</dbReference>
<dbReference type="InterPro" id="IPR035927">
    <property type="entry name" value="DUSP-like_sf"/>
</dbReference>
<dbReference type="InterPro" id="IPR038765">
    <property type="entry name" value="Papain-like_cys_pep_sf"/>
</dbReference>
<dbReference type="InterPro" id="IPR006615">
    <property type="entry name" value="Pept_C19_DUSP"/>
</dbReference>
<dbReference type="InterPro" id="IPR001394">
    <property type="entry name" value="Peptidase_C19_UCH"/>
</dbReference>
<dbReference type="InterPro" id="IPR050185">
    <property type="entry name" value="Ub_carboxyl-term_hydrolase"/>
</dbReference>
<dbReference type="InterPro" id="IPR018200">
    <property type="entry name" value="USP_CS"/>
</dbReference>
<dbReference type="InterPro" id="IPR028889">
    <property type="entry name" value="USP_dom"/>
</dbReference>
<dbReference type="InterPro" id="IPR013083">
    <property type="entry name" value="Znf_RING/FYVE/PHD"/>
</dbReference>
<dbReference type="InterPro" id="IPR001607">
    <property type="entry name" value="Znf_UBP"/>
</dbReference>
<dbReference type="PANTHER" id="PTHR21646">
    <property type="entry name" value="UBIQUITIN CARBOXYL-TERMINAL HYDROLASE"/>
    <property type="match status" value="1"/>
</dbReference>
<dbReference type="PANTHER" id="PTHR21646:SF32">
    <property type="entry name" value="UBIQUITIN CARBOXYL-TERMINAL HYDROLASE 33"/>
    <property type="match status" value="1"/>
</dbReference>
<dbReference type="Pfam" id="PF06337">
    <property type="entry name" value="DUSP"/>
    <property type="match status" value="2"/>
</dbReference>
<dbReference type="Pfam" id="PF00443">
    <property type="entry name" value="UCH"/>
    <property type="match status" value="1"/>
</dbReference>
<dbReference type="Pfam" id="PF02148">
    <property type="entry name" value="zf-UBP"/>
    <property type="match status" value="1"/>
</dbReference>
<dbReference type="SMART" id="SM00695">
    <property type="entry name" value="DUSP"/>
    <property type="match status" value="2"/>
</dbReference>
<dbReference type="SMART" id="SM00290">
    <property type="entry name" value="ZnF_UBP"/>
    <property type="match status" value="1"/>
</dbReference>
<dbReference type="SUPFAM" id="SSF54001">
    <property type="entry name" value="Cysteine proteinases"/>
    <property type="match status" value="1"/>
</dbReference>
<dbReference type="SUPFAM" id="SSF143791">
    <property type="entry name" value="DUSP-like"/>
    <property type="match status" value="2"/>
</dbReference>
<dbReference type="SUPFAM" id="SSF57850">
    <property type="entry name" value="RING/U-box"/>
    <property type="match status" value="1"/>
</dbReference>
<dbReference type="PROSITE" id="PS51283">
    <property type="entry name" value="DUSP"/>
    <property type="match status" value="2"/>
</dbReference>
<dbReference type="PROSITE" id="PS00972">
    <property type="entry name" value="USP_1"/>
    <property type="match status" value="1"/>
</dbReference>
<dbReference type="PROSITE" id="PS00973">
    <property type="entry name" value="USP_2"/>
    <property type="match status" value="1"/>
</dbReference>
<dbReference type="PROSITE" id="PS50235">
    <property type="entry name" value="USP_3"/>
    <property type="match status" value="1"/>
</dbReference>
<dbReference type="PROSITE" id="PS50271">
    <property type="entry name" value="ZF_UBP"/>
    <property type="match status" value="1"/>
</dbReference>
<feature type="chain" id="PRO_0000390425" description="Ubiquitin carboxyl-terminal hydrolase 33">
    <location>
        <begin position="1"/>
        <end position="914"/>
    </location>
</feature>
<feature type="domain" description="USP">
    <location>
        <begin position="154"/>
        <end position="683"/>
    </location>
</feature>
<feature type="domain" description="DUSP 1" evidence="4">
    <location>
        <begin position="685"/>
        <end position="778"/>
    </location>
</feature>
<feature type="domain" description="DUSP 2" evidence="4">
    <location>
        <begin position="786"/>
        <end position="893"/>
    </location>
</feature>
<feature type="zinc finger region" description="UBP-type" evidence="3">
    <location>
        <begin position="6"/>
        <end position="109"/>
    </location>
</feature>
<feature type="region of interest" description="Disordered" evidence="7">
    <location>
        <begin position="266"/>
        <end position="313"/>
    </location>
</feature>
<feature type="region of interest" description="Disordered" evidence="7">
    <location>
        <begin position="387"/>
        <end position="437"/>
    </location>
</feature>
<feature type="compositionally biased region" description="Polar residues" evidence="7">
    <location>
        <begin position="283"/>
        <end position="313"/>
    </location>
</feature>
<feature type="compositionally biased region" description="Polar residues" evidence="7">
    <location>
        <begin position="387"/>
        <end position="410"/>
    </location>
</feature>
<feature type="compositionally biased region" description="Basic residues" evidence="7">
    <location>
        <begin position="421"/>
        <end position="437"/>
    </location>
</feature>
<feature type="active site" description="Nucleophile" evidence="5 6">
    <location>
        <position position="163"/>
    </location>
</feature>
<feature type="active site" description="Proton acceptor" evidence="5 6">
    <location>
        <position position="641"/>
    </location>
</feature>
<feature type="binding site" evidence="3">
    <location>
        <position position="8"/>
    </location>
    <ligand>
        <name>Zn(2+)</name>
        <dbReference type="ChEBI" id="CHEBI:29105"/>
        <label>1</label>
    </ligand>
</feature>
<feature type="binding site" evidence="3">
    <location>
        <position position="10"/>
    </location>
    <ligand>
        <name>Zn(2+)</name>
        <dbReference type="ChEBI" id="CHEBI:29105"/>
        <label>1</label>
    </ligand>
</feature>
<feature type="binding site" evidence="3">
    <location>
        <position position="30"/>
    </location>
    <ligand>
        <name>Zn(2+)</name>
        <dbReference type="ChEBI" id="CHEBI:29105"/>
        <label>2</label>
    </ligand>
</feature>
<feature type="binding site" evidence="3">
    <location>
        <position position="33"/>
    </location>
    <ligand>
        <name>Zn(2+)</name>
        <dbReference type="ChEBI" id="CHEBI:29105"/>
        <label>2</label>
    </ligand>
</feature>
<feature type="binding site" evidence="3">
    <location>
        <position position="43"/>
    </location>
    <ligand>
        <name>Zn(2+)</name>
        <dbReference type="ChEBI" id="CHEBI:29105"/>
        <label>3</label>
    </ligand>
</feature>
<feature type="binding site" evidence="3">
    <location>
        <position position="48"/>
    </location>
    <ligand>
        <name>Zn(2+)</name>
        <dbReference type="ChEBI" id="CHEBI:29105"/>
        <label>3</label>
    </ligand>
</feature>
<feature type="binding site" evidence="3">
    <location>
        <position position="53"/>
    </location>
    <ligand>
        <name>Zn(2+)</name>
        <dbReference type="ChEBI" id="CHEBI:29105"/>
        <label>2</label>
    </ligand>
</feature>
<feature type="binding site" evidence="3">
    <location>
        <position position="60"/>
    </location>
    <ligand>
        <name>Zn(2+)</name>
        <dbReference type="ChEBI" id="CHEBI:29105"/>
        <label>2</label>
    </ligand>
</feature>
<feature type="binding site" evidence="3">
    <location>
        <position position="64"/>
    </location>
    <ligand>
        <name>Zn(2+)</name>
        <dbReference type="ChEBI" id="CHEBI:29105"/>
        <label>3</label>
    </ligand>
</feature>
<feature type="binding site" evidence="3">
    <location>
        <position position="70"/>
    </location>
    <ligand>
        <name>Zn(2+)</name>
        <dbReference type="ChEBI" id="CHEBI:29105"/>
        <label>3</label>
    </ligand>
</feature>
<feature type="binding site" evidence="3">
    <location>
        <position position="83"/>
    </location>
    <ligand>
        <name>Zn(2+)</name>
        <dbReference type="ChEBI" id="CHEBI:29105"/>
        <label>1</label>
    </ligand>
</feature>
<feature type="binding site" evidence="3">
    <location>
        <position position="86"/>
    </location>
    <ligand>
        <name>Zn(2+)</name>
        <dbReference type="ChEBI" id="CHEBI:29105"/>
        <label>1</label>
    </ligand>
</feature>
<feature type="modified residue" description="Phosphoserine" evidence="2">
    <location>
        <position position="345"/>
    </location>
</feature>
<feature type="modified residue" description="Phosphoserine" evidence="2">
    <location>
        <position position="407"/>
    </location>
</feature>
<feature type="sequence conflict" description="In Ref. 1; CAH92249." evidence="8" ref="1">
    <original>Q</original>
    <variation>H</variation>
    <location>
        <position position="27"/>
    </location>
</feature>
<feature type="sequence conflict" description="In Ref. 1; CAH92249." evidence="8" ref="1">
    <original>I</original>
    <variation>V</variation>
    <location>
        <position position="63"/>
    </location>
</feature>
<feature type="sequence conflict" description="In Ref. 1; CAH92249." evidence="8" ref="1">
    <original>S</original>
    <variation>R</variation>
    <location>
        <position position="305"/>
    </location>
</feature>
<feature type="sequence conflict" description="In Ref. 1; CAH92249." evidence="8" ref="1">
    <original>E</original>
    <variation>K</variation>
    <location>
        <position position="787"/>
    </location>
</feature>
<name>UBP33_PONAB</name>
<protein>
    <recommendedName>
        <fullName>Ubiquitin carboxyl-terminal hydrolase 33</fullName>
        <ecNumber>3.4.19.12</ecNumber>
    </recommendedName>
    <alternativeName>
        <fullName>Deubiquitinating enzyme 33</fullName>
    </alternativeName>
    <alternativeName>
        <fullName>Ubiquitin thioesterase 33</fullName>
    </alternativeName>
    <alternativeName>
        <fullName>Ubiquitin-specific-processing protease 33</fullName>
    </alternativeName>
</protein>
<reference key="1">
    <citation type="submission" date="2004-11" db="EMBL/GenBank/DDBJ databases">
        <authorList>
            <consortium name="The German cDNA consortium"/>
        </authorList>
    </citation>
    <scope>NUCLEOTIDE SEQUENCE [LARGE SCALE MRNA]</scope>
    <source>
        <tissue>Heart</tissue>
        <tissue>Kidney</tissue>
    </source>
</reference>
<proteinExistence type="evidence at transcript level"/>